<keyword id="KW-1003">Cell membrane</keyword>
<keyword id="KW-0285">Flavoprotein</keyword>
<keyword id="KW-0288">FMN</keyword>
<keyword id="KW-0472">Membrane</keyword>
<keyword id="KW-0560">Oxidoreductase</keyword>
<keyword id="KW-0665">Pyrimidine biosynthesis</keyword>
<gene>
    <name evidence="1" type="primary">pyrD</name>
    <name type="ordered locus">Spro_1740</name>
</gene>
<feature type="chain" id="PRO_1000058684" description="Dihydroorotate dehydrogenase (quinone)">
    <location>
        <begin position="1"/>
        <end position="336"/>
    </location>
</feature>
<feature type="active site" description="Nucleophile" evidence="1">
    <location>
        <position position="175"/>
    </location>
</feature>
<feature type="binding site" evidence="1">
    <location>
        <begin position="62"/>
        <end position="66"/>
    </location>
    <ligand>
        <name>FMN</name>
        <dbReference type="ChEBI" id="CHEBI:58210"/>
    </ligand>
</feature>
<feature type="binding site" evidence="1">
    <location>
        <position position="66"/>
    </location>
    <ligand>
        <name>substrate</name>
    </ligand>
</feature>
<feature type="binding site" evidence="1">
    <location>
        <position position="86"/>
    </location>
    <ligand>
        <name>FMN</name>
        <dbReference type="ChEBI" id="CHEBI:58210"/>
    </ligand>
</feature>
<feature type="binding site" evidence="1">
    <location>
        <begin position="111"/>
        <end position="115"/>
    </location>
    <ligand>
        <name>substrate</name>
    </ligand>
</feature>
<feature type="binding site" evidence="1">
    <location>
        <position position="139"/>
    </location>
    <ligand>
        <name>FMN</name>
        <dbReference type="ChEBI" id="CHEBI:58210"/>
    </ligand>
</feature>
<feature type="binding site" evidence="1">
    <location>
        <position position="172"/>
    </location>
    <ligand>
        <name>FMN</name>
        <dbReference type="ChEBI" id="CHEBI:58210"/>
    </ligand>
</feature>
<feature type="binding site" evidence="1">
    <location>
        <position position="172"/>
    </location>
    <ligand>
        <name>substrate</name>
    </ligand>
</feature>
<feature type="binding site" evidence="1">
    <location>
        <position position="177"/>
    </location>
    <ligand>
        <name>substrate</name>
    </ligand>
</feature>
<feature type="binding site" evidence="1">
    <location>
        <position position="217"/>
    </location>
    <ligand>
        <name>FMN</name>
        <dbReference type="ChEBI" id="CHEBI:58210"/>
    </ligand>
</feature>
<feature type="binding site" evidence="1">
    <location>
        <position position="245"/>
    </location>
    <ligand>
        <name>FMN</name>
        <dbReference type="ChEBI" id="CHEBI:58210"/>
    </ligand>
</feature>
<feature type="binding site" evidence="1">
    <location>
        <begin position="246"/>
        <end position="247"/>
    </location>
    <ligand>
        <name>substrate</name>
    </ligand>
</feature>
<feature type="binding site" evidence="1">
    <location>
        <position position="268"/>
    </location>
    <ligand>
        <name>FMN</name>
        <dbReference type="ChEBI" id="CHEBI:58210"/>
    </ligand>
</feature>
<feature type="binding site" evidence="1">
    <location>
        <position position="297"/>
    </location>
    <ligand>
        <name>FMN</name>
        <dbReference type="ChEBI" id="CHEBI:58210"/>
    </ligand>
</feature>
<feature type="binding site" evidence="1">
    <location>
        <begin position="318"/>
        <end position="319"/>
    </location>
    <ligand>
        <name>FMN</name>
        <dbReference type="ChEBI" id="CHEBI:58210"/>
    </ligand>
</feature>
<protein>
    <recommendedName>
        <fullName evidence="1">Dihydroorotate dehydrogenase (quinone)</fullName>
        <ecNumber evidence="1">1.3.5.2</ecNumber>
    </recommendedName>
    <alternativeName>
        <fullName evidence="1">DHOdehase</fullName>
        <shortName evidence="1">DHOD</shortName>
        <shortName evidence="1">DHODase</shortName>
    </alternativeName>
    <alternativeName>
        <fullName evidence="1">Dihydroorotate oxidase</fullName>
    </alternativeName>
</protein>
<proteinExistence type="inferred from homology"/>
<reference key="1">
    <citation type="submission" date="2007-09" db="EMBL/GenBank/DDBJ databases">
        <title>Complete sequence of chromosome of Serratia proteamaculans 568.</title>
        <authorList>
            <consortium name="US DOE Joint Genome Institute"/>
            <person name="Copeland A."/>
            <person name="Lucas S."/>
            <person name="Lapidus A."/>
            <person name="Barry K."/>
            <person name="Glavina del Rio T."/>
            <person name="Dalin E."/>
            <person name="Tice H."/>
            <person name="Pitluck S."/>
            <person name="Chain P."/>
            <person name="Malfatti S."/>
            <person name="Shin M."/>
            <person name="Vergez L."/>
            <person name="Schmutz J."/>
            <person name="Larimer F."/>
            <person name="Land M."/>
            <person name="Hauser L."/>
            <person name="Kyrpides N."/>
            <person name="Kim E."/>
            <person name="Taghavi S."/>
            <person name="Newman L."/>
            <person name="Vangronsveld J."/>
            <person name="van der Lelie D."/>
            <person name="Richardson P."/>
        </authorList>
    </citation>
    <scope>NUCLEOTIDE SEQUENCE [LARGE SCALE GENOMIC DNA]</scope>
    <source>
        <strain>568</strain>
    </source>
</reference>
<evidence type="ECO:0000255" key="1">
    <source>
        <dbReference type="HAMAP-Rule" id="MF_00225"/>
    </source>
</evidence>
<organism>
    <name type="scientific">Serratia proteamaculans (strain 568)</name>
    <dbReference type="NCBI Taxonomy" id="399741"/>
    <lineage>
        <taxon>Bacteria</taxon>
        <taxon>Pseudomonadati</taxon>
        <taxon>Pseudomonadota</taxon>
        <taxon>Gammaproteobacteria</taxon>
        <taxon>Enterobacterales</taxon>
        <taxon>Yersiniaceae</taxon>
        <taxon>Serratia</taxon>
    </lineage>
</organism>
<dbReference type="EC" id="1.3.5.2" evidence="1"/>
<dbReference type="EMBL" id="CP000826">
    <property type="protein sequence ID" value="ABV40844.1"/>
    <property type="molecule type" value="Genomic_DNA"/>
</dbReference>
<dbReference type="SMR" id="A8GCK4"/>
<dbReference type="STRING" id="399741.Spro_1740"/>
<dbReference type="KEGG" id="spe:Spro_1740"/>
<dbReference type="eggNOG" id="COG0167">
    <property type="taxonomic scope" value="Bacteria"/>
</dbReference>
<dbReference type="HOGENOM" id="CLU_013640_2_0_6"/>
<dbReference type="OrthoDB" id="9802377at2"/>
<dbReference type="UniPathway" id="UPA00070">
    <property type="reaction ID" value="UER00946"/>
</dbReference>
<dbReference type="GO" id="GO:0005737">
    <property type="term" value="C:cytoplasm"/>
    <property type="evidence" value="ECO:0007669"/>
    <property type="project" value="InterPro"/>
</dbReference>
<dbReference type="GO" id="GO:0005886">
    <property type="term" value="C:plasma membrane"/>
    <property type="evidence" value="ECO:0007669"/>
    <property type="project" value="UniProtKB-SubCell"/>
</dbReference>
<dbReference type="GO" id="GO:0106430">
    <property type="term" value="F:dihydroorotate dehydrogenase (quinone) activity"/>
    <property type="evidence" value="ECO:0007669"/>
    <property type="project" value="UniProtKB-EC"/>
</dbReference>
<dbReference type="GO" id="GO:0006207">
    <property type="term" value="P:'de novo' pyrimidine nucleobase biosynthetic process"/>
    <property type="evidence" value="ECO:0007669"/>
    <property type="project" value="InterPro"/>
</dbReference>
<dbReference type="GO" id="GO:0044205">
    <property type="term" value="P:'de novo' UMP biosynthetic process"/>
    <property type="evidence" value="ECO:0007669"/>
    <property type="project" value="UniProtKB-UniRule"/>
</dbReference>
<dbReference type="CDD" id="cd04738">
    <property type="entry name" value="DHOD_2_like"/>
    <property type="match status" value="1"/>
</dbReference>
<dbReference type="FunFam" id="3.20.20.70:FF:000028">
    <property type="entry name" value="Dihydroorotate dehydrogenase (quinone)"/>
    <property type="match status" value="1"/>
</dbReference>
<dbReference type="Gene3D" id="3.20.20.70">
    <property type="entry name" value="Aldolase class I"/>
    <property type="match status" value="1"/>
</dbReference>
<dbReference type="HAMAP" id="MF_00225">
    <property type="entry name" value="DHO_dh_type2"/>
    <property type="match status" value="1"/>
</dbReference>
<dbReference type="InterPro" id="IPR013785">
    <property type="entry name" value="Aldolase_TIM"/>
</dbReference>
<dbReference type="InterPro" id="IPR050074">
    <property type="entry name" value="DHO_dehydrogenase"/>
</dbReference>
<dbReference type="InterPro" id="IPR012135">
    <property type="entry name" value="Dihydroorotate_DH_1_2"/>
</dbReference>
<dbReference type="InterPro" id="IPR005719">
    <property type="entry name" value="Dihydroorotate_DH_2"/>
</dbReference>
<dbReference type="InterPro" id="IPR005720">
    <property type="entry name" value="Dihydroorotate_DH_cat"/>
</dbReference>
<dbReference type="InterPro" id="IPR001295">
    <property type="entry name" value="Dihydroorotate_DH_CS"/>
</dbReference>
<dbReference type="NCBIfam" id="NF003644">
    <property type="entry name" value="PRK05286.1-1"/>
    <property type="match status" value="1"/>
</dbReference>
<dbReference type="NCBIfam" id="NF003645">
    <property type="entry name" value="PRK05286.1-2"/>
    <property type="match status" value="1"/>
</dbReference>
<dbReference type="NCBIfam" id="NF003646">
    <property type="entry name" value="PRK05286.1-4"/>
    <property type="match status" value="1"/>
</dbReference>
<dbReference type="NCBIfam" id="NF003652">
    <property type="entry name" value="PRK05286.2-5"/>
    <property type="match status" value="1"/>
</dbReference>
<dbReference type="NCBIfam" id="TIGR01036">
    <property type="entry name" value="pyrD_sub2"/>
    <property type="match status" value="1"/>
</dbReference>
<dbReference type="PANTHER" id="PTHR48109:SF4">
    <property type="entry name" value="DIHYDROOROTATE DEHYDROGENASE (QUINONE), MITOCHONDRIAL"/>
    <property type="match status" value="1"/>
</dbReference>
<dbReference type="PANTHER" id="PTHR48109">
    <property type="entry name" value="DIHYDROOROTATE DEHYDROGENASE (QUINONE), MITOCHONDRIAL-RELATED"/>
    <property type="match status" value="1"/>
</dbReference>
<dbReference type="Pfam" id="PF01180">
    <property type="entry name" value="DHO_dh"/>
    <property type="match status" value="1"/>
</dbReference>
<dbReference type="PIRSF" id="PIRSF000164">
    <property type="entry name" value="DHO_oxidase"/>
    <property type="match status" value="1"/>
</dbReference>
<dbReference type="SUPFAM" id="SSF51395">
    <property type="entry name" value="FMN-linked oxidoreductases"/>
    <property type="match status" value="1"/>
</dbReference>
<dbReference type="PROSITE" id="PS00911">
    <property type="entry name" value="DHODEHASE_1"/>
    <property type="match status" value="1"/>
</dbReference>
<dbReference type="PROSITE" id="PS00912">
    <property type="entry name" value="DHODEHASE_2"/>
    <property type="match status" value="1"/>
</dbReference>
<name>PYRD_SERP5</name>
<sequence>MYYPLIRKALFQLDPERAHELTFQQLRRVTGTPLEFLIRQSVPTKPVSCMGLSFKNPLGLAAGLDKDGECIDAFGAMGFGFVEVGTVTPRPQSGNDKPRLFRIVEAEGLINRMGFNNQGVDNLVENVKKSHFGGILGINIGKNKDTPVEQGKDDYLICMDKVYPYAGYIAINISSPNTPGLRSLQYGEALDDLLAAIKNKQQELHERHHKYVPVAVKIAPDLSEEELIQIADSLVRHNIDGVIATNTTLDRKLIQGLNYCEQMGGLSGRPLQASSTEVIRRLSLELQGRLPIIGVGGIDSLMAAREKMAAGASLVQIYSGFIFKGPRLIKDIVNYI</sequence>
<accession>A8GCK4</accession>
<comment type="function">
    <text evidence="1">Catalyzes the conversion of dihydroorotate to orotate with quinone as electron acceptor.</text>
</comment>
<comment type="catalytic activity">
    <reaction evidence="1">
        <text>(S)-dihydroorotate + a quinone = orotate + a quinol</text>
        <dbReference type="Rhea" id="RHEA:30187"/>
        <dbReference type="ChEBI" id="CHEBI:24646"/>
        <dbReference type="ChEBI" id="CHEBI:30839"/>
        <dbReference type="ChEBI" id="CHEBI:30864"/>
        <dbReference type="ChEBI" id="CHEBI:132124"/>
        <dbReference type="EC" id="1.3.5.2"/>
    </reaction>
</comment>
<comment type="cofactor">
    <cofactor evidence="1">
        <name>FMN</name>
        <dbReference type="ChEBI" id="CHEBI:58210"/>
    </cofactor>
    <text evidence="1">Binds 1 FMN per subunit.</text>
</comment>
<comment type="pathway">
    <text evidence="1">Pyrimidine metabolism; UMP biosynthesis via de novo pathway; orotate from (S)-dihydroorotate (quinone route): step 1/1.</text>
</comment>
<comment type="subunit">
    <text evidence="1">Monomer.</text>
</comment>
<comment type="subcellular location">
    <subcellularLocation>
        <location evidence="1">Cell membrane</location>
        <topology evidence="1">Peripheral membrane protein</topology>
    </subcellularLocation>
</comment>
<comment type="similarity">
    <text evidence="1">Belongs to the dihydroorotate dehydrogenase family. Type 2 subfamily.</text>
</comment>